<keyword id="KW-0067">ATP-binding</keyword>
<keyword id="KW-0997">Cell inner membrane</keyword>
<keyword id="KW-1003">Cell membrane</keyword>
<keyword id="KW-0963">Cytoplasm</keyword>
<keyword id="KW-0472">Membrane</keyword>
<keyword id="KW-0479">Metal-binding</keyword>
<keyword id="KW-0547">Nucleotide-binding</keyword>
<keyword id="KW-0653">Protein transport</keyword>
<keyword id="KW-1185">Reference proteome</keyword>
<keyword id="KW-1278">Translocase</keyword>
<keyword id="KW-0811">Translocation</keyword>
<keyword id="KW-0813">Transport</keyword>
<keyword id="KW-0862">Zinc</keyword>
<evidence type="ECO:0000255" key="1">
    <source>
        <dbReference type="HAMAP-Rule" id="MF_01382"/>
    </source>
</evidence>
<evidence type="ECO:0000305" key="2"/>
<organism>
    <name type="scientific">Parvibaculum lavamentivorans (strain DS-1 / DSM 13023 / NCIMB 13966)</name>
    <dbReference type="NCBI Taxonomy" id="402881"/>
    <lineage>
        <taxon>Bacteria</taxon>
        <taxon>Pseudomonadati</taxon>
        <taxon>Pseudomonadota</taxon>
        <taxon>Alphaproteobacteria</taxon>
        <taxon>Hyphomicrobiales</taxon>
        <taxon>Parvibaculaceae</taxon>
        <taxon>Parvibaculum</taxon>
    </lineage>
</organism>
<name>SECA_PARL1</name>
<feature type="chain" id="PRO_0000320882" description="Protein translocase subunit SecA">
    <location>
        <begin position="1"/>
        <end position="906"/>
    </location>
</feature>
<feature type="binding site" evidence="1">
    <location>
        <position position="89"/>
    </location>
    <ligand>
        <name>ATP</name>
        <dbReference type="ChEBI" id="CHEBI:30616"/>
    </ligand>
</feature>
<feature type="binding site" evidence="1">
    <location>
        <begin position="107"/>
        <end position="111"/>
    </location>
    <ligand>
        <name>ATP</name>
        <dbReference type="ChEBI" id="CHEBI:30616"/>
    </ligand>
</feature>
<feature type="binding site" evidence="1">
    <location>
        <position position="501"/>
    </location>
    <ligand>
        <name>ATP</name>
        <dbReference type="ChEBI" id="CHEBI:30616"/>
    </ligand>
</feature>
<feature type="binding site" evidence="1">
    <location>
        <position position="891"/>
    </location>
    <ligand>
        <name>Zn(2+)</name>
        <dbReference type="ChEBI" id="CHEBI:29105"/>
    </ligand>
</feature>
<feature type="binding site" evidence="1">
    <location>
        <position position="893"/>
    </location>
    <ligand>
        <name>Zn(2+)</name>
        <dbReference type="ChEBI" id="CHEBI:29105"/>
    </ligand>
</feature>
<feature type="binding site" evidence="1">
    <location>
        <position position="902"/>
    </location>
    <ligand>
        <name>Zn(2+)</name>
        <dbReference type="ChEBI" id="CHEBI:29105"/>
    </ligand>
</feature>
<feature type="binding site" evidence="1">
    <location>
        <position position="903"/>
    </location>
    <ligand>
        <name>Zn(2+)</name>
        <dbReference type="ChEBI" id="CHEBI:29105"/>
    </ligand>
</feature>
<comment type="function">
    <text evidence="1">Part of the Sec protein translocase complex. Interacts with the SecYEG preprotein conducting channel. Has a central role in coupling the hydrolysis of ATP to the transfer of proteins into and across the cell membrane, serving both as a receptor for the preprotein-SecB complex and as an ATP-driven molecular motor driving the stepwise translocation of polypeptide chains across the membrane.</text>
</comment>
<comment type="catalytic activity">
    <reaction evidence="1">
        <text>ATP + H2O + cellular proteinSide 1 = ADP + phosphate + cellular proteinSide 2.</text>
        <dbReference type="EC" id="7.4.2.8"/>
    </reaction>
</comment>
<comment type="cofactor">
    <cofactor evidence="1">
        <name>Zn(2+)</name>
        <dbReference type="ChEBI" id="CHEBI:29105"/>
    </cofactor>
    <text evidence="1">May bind 1 zinc ion per subunit.</text>
</comment>
<comment type="subunit">
    <text evidence="1">Monomer and homodimer. Part of the essential Sec protein translocation apparatus which comprises SecA, SecYEG and auxiliary proteins SecDF-YajC and YidC.</text>
</comment>
<comment type="subcellular location">
    <subcellularLocation>
        <location evidence="1">Cell inner membrane</location>
        <topology evidence="1">Peripheral membrane protein</topology>
        <orientation evidence="1">Cytoplasmic side</orientation>
    </subcellularLocation>
    <subcellularLocation>
        <location evidence="1">Cytoplasm</location>
    </subcellularLocation>
    <text evidence="1">Distribution is 50-50.</text>
</comment>
<comment type="similarity">
    <text evidence="1">Belongs to the SecA family.</text>
</comment>
<comment type="sequence caution" evidence="2">
    <conflict type="erroneous initiation">
        <sequence resource="EMBL-CDS" id="ABS63349"/>
    </conflict>
    <text>Extended N-terminus.</text>
</comment>
<dbReference type="EC" id="7.4.2.8" evidence="1"/>
<dbReference type="EMBL" id="CP000774">
    <property type="protein sequence ID" value="ABS63349.1"/>
    <property type="status" value="ALT_INIT"/>
    <property type="molecule type" value="Genomic_DNA"/>
</dbReference>
<dbReference type="RefSeq" id="WP_041536527.1">
    <property type="nucleotide sequence ID" value="NC_009719.1"/>
</dbReference>
<dbReference type="SMR" id="A7HTW6"/>
<dbReference type="STRING" id="402881.Plav_1730"/>
<dbReference type="KEGG" id="pla:Plav_1730"/>
<dbReference type="eggNOG" id="COG0653">
    <property type="taxonomic scope" value="Bacteria"/>
</dbReference>
<dbReference type="HOGENOM" id="CLU_005314_3_0_5"/>
<dbReference type="OrthoDB" id="9805579at2"/>
<dbReference type="Proteomes" id="UP000006377">
    <property type="component" value="Chromosome"/>
</dbReference>
<dbReference type="GO" id="GO:0031522">
    <property type="term" value="C:cell envelope Sec protein transport complex"/>
    <property type="evidence" value="ECO:0007669"/>
    <property type="project" value="TreeGrafter"/>
</dbReference>
<dbReference type="GO" id="GO:0005829">
    <property type="term" value="C:cytosol"/>
    <property type="evidence" value="ECO:0007669"/>
    <property type="project" value="TreeGrafter"/>
</dbReference>
<dbReference type="GO" id="GO:0005886">
    <property type="term" value="C:plasma membrane"/>
    <property type="evidence" value="ECO:0007669"/>
    <property type="project" value="UniProtKB-SubCell"/>
</dbReference>
<dbReference type="GO" id="GO:0005524">
    <property type="term" value="F:ATP binding"/>
    <property type="evidence" value="ECO:0007669"/>
    <property type="project" value="UniProtKB-UniRule"/>
</dbReference>
<dbReference type="GO" id="GO:0046872">
    <property type="term" value="F:metal ion binding"/>
    <property type="evidence" value="ECO:0007669"/>
    <property type="project" value="UniProtKB-KW"/>
</dbReference>
<dbReference type="GO" id="GO:0008564">
    <property type="term" value="F:protein-exporting ATPase activity"/>
    <property type="evidence" value="ECO:0007669"/>
    <property type="project" value="UniProtKB-EC"/>
</dbReference>
<dbReference type="GO" id="GO:0065002">
    <property type="term" value="P:intracellular protein transmembrane transport"/>
    <property type="evidence" value="ECO:0007669"/>
    <property type="project" value="UniProtKB-UniRule"/>
</dbReference>
<dbReference type="GO" id="GO:0017038">
    <property type="term" value="P:protein import"/>
    <property type="evidence" value="ECO:0007669"/>
    <property type="project" value="InterPro"/>
</dbReference>
<dbReference type="GO" id="GO:0006605">
    <property type="term" value="P:protein targeting"/>
    <property type="evidence" value="ECO:0007669"/>
    <property type="project" value="UniProtKB-UniRule"/>
</dbReference>
<dbReference type="GO" id="GO:0043952">
    <property type="term" value="P:protein transport by the Sec complex"/>
    <property type="evidence" value="ECO:0007669"/>
    <property type="project" value="TreeGrafter"/>
</dbReference>
<dbReference type="CDD" id="cd17928">
    <property type="entry name" value="DEXDc_SecA"/>
    <property type="match status" value="1"/>
</dbReference>
<dbReference type="CDD" id="cd18803">
    <property type="entry name" value="SF2_C_secA"/>
    <property type="match status" value="1"/>
</dbReference>
<dbReference type="FunFam" id="3.90.1440.10:FF:000001">
    <property type="entry name" value="Preprotein translocase subunit SecA"/>
    <property type="match status" value="1"/>
</dbReference>
<dbReference type="FunFam" id="1.10.3060.10:FF:000003">
    <property type="entry name" value="Protein translocase subunit SecA"/>
    <property type="match status" value="1"/>
</dbReference>
<dbReference type="FunFam" id="3.40.50.300:FF:000334">
    <property type="entry name" value="Protein translocase subunit SecA"/>
    <property type="match status" value="1"/>
</dbReference>
<dbReference type="FunFam" id="3.40.50.300:FF:001790">
    <property type="entry name" value="Protein translocase subunit SecA"/>
    <property type="match status" value="1"/>
</dbReference>
<dbReference type="Gene3D" id="3.10.450.50">
    <property type="match status" value="1"/>
</dbReference>
<dbReference type="Gene3D" id="1.10.3060.10">
    <property type="entry name" value="Helical scaffold and wing domains of SecA"/>
    <property type="match status" value="1"/>
</dbReference>
<dbReference type="Gene3D" id="3.40.50.300">
    <property type="entry name" value="P-loop containing nucleotide triphosphate hydrolases"/>
    <property type="match status" value="2"/>
</dbReference>
<dbReference type="Gene3D" id="3.90.1440.10">
    <property type="entry name" value="SecA, preprotein cross-linking domain"/>
    <property type="match status" value="1"/>
</dbReference>
<dbReference type="HAMAP" id="MF_01382">
    <property type="entry name" value="SecA"/>
    <property type="match status" value="1"/>
</dbReference>
<dbReference type="InterPro" id="IPR014001">
    <property type="entry name" value="Helicase_ATP-bd"/>
</dbReference>
<dbReference type="InterPro" id="IPR001650">
    <property type="entry name" value="Helicase_C-like"/>
</dbReference>
<dbReference type="InterPro" id="IPR027417">
    <property type="entry name" value="P-loop_NTPase"/>
</dbReference>
<dbReference type="InterPro" id="IPR004027">
    <property type="entry name" value="SEC_C_motif"/>
</dbReference>
<dbReference type="InterPro" id="IPR000185">
    <property type="entry name" value="SecA"/>
</dbReference>
<dbReference type="InterPro" id="IPR020937">
    <property type="entry name" value="SecA_CS"/>
</dbReference>
<dbReference type="InterPro" id="IPR011115">
    <property type="entry name" value="SecA_DEAD"/>
</dbReference>
<dbReference type="InterPro" id="IPR014018">
    <property type="entry name" value="SecA_motor_DEAD"/>
</dbReference>
<dbReference type="InterPro" id="IPR011130">
    <property type="entry name" value="SecA_preprotein_X-link_dom"/>
</dbReference>
<dbReference type="InterPro" id="IPR044722">
    <property type="entry name" value="SecA_SF2_C"/>
</dbReference>
<dbReference type="InterPro" id="IPR011116">
    <property type="entry name" value="SecA_Wing/Scaffold"/>
</dbReference>
<dbReference type="InterPro" id="IPR036266">
    <property type="entry name" value="SecA_Wing/Scaffold_sf"/>
</dbReference>
<dbReference type="InterPro" id="IPR036670">
    <property type="entry name" value="SecA_X-link_sf"/>
</dbReference>
<dbReference type="NCBIfam" id="NF009538">
    <property type="entry name" value="PRK12904.1"/>
    <property type="match status" value="1"/>
</dbReference>
<dbReference type="NCBIfam" id="TIGR00963">
    <property type="entry name" value="secA"/>
    <property type="match status" value="1"/>
</dbReference>
<dbReference type="PANTHER" id="PTHR30612:SF0">
    <property type="entry name" value="CHLOROPLAST PROTEIN-TRANSPORTING ATPASE"/>
    <property type="match status" value="1"/>
</dbReference>
<dbReference type="PANTHER" id="PTHR30612">
    <property type="entry name" value="SECA INNER MEMBRANE COMPONENT OF SEC PROTEIN SECRETION SYSTEM"/>
    <property type="match status" value="1"/>
</dbReference>
<dbReference type="Pfam" id="PF21090">
    <property type="entry name" value="P-loop_SecA"/>
    <property type="match status" value="1"/>
</dbReference>
<dbReference type="Pfam" id="PF02810">
    <property type="entry name" value="SEC-C"/>
    <property type="match status" value="1"/>
</dbReference>
<dbReference type="Pfam" id="PF07517">
    <property type="entry name" value="SecA_DEAD"/>
    <property type="match status" value="1"/>
</dbReference>
<dbReference type="Pfam" id="PF01043">
    <property type="entry name" value="SecA_PP_bind"/>
    <property type="match status" value="1"/>
</dbReference>
<dbReference type="Pfam" id="PF07516">
    <property type="entry name" value="SecA_SW"/>
    <property type="match status" value="1"/>
</dbReference>
<dbReference type="PRINTS" id="PR00906">
    <property type="entry name" value="SECA"/>
</dbReference>
<dbReference type="SMART" id="SM00957">
    <property type="entry name" value="SecA_DEAD"/>
    <property type="match status" value="1"/>
</dbReference>
<dbReference type="SMART" id="SM00958">
    <property type="entry name" value="SecA_PP_bind"/>
    <property type="match status" value="1"/>
</dbReference>
<dbReference type="SUPFAM" id="SSF81886">
    <property type="entry name" value="Helical scaffold and wing domains of SecA"/>
    <property type="match status" value="1"/>
</dbReference>
<dbReference type="SUPFAM" id="SSF52540">
    <property type="entry name" value="P-loop containing nucleoside triphosphate hydrolases"/>
    <property type="match status" value="2"/>
</dbReference>
<dbReference type="SUPFAM" id="SSF81767">
    <property type="entry name" value="Pre-protein crosslinking domain of SecA"/>
    <property type="match status" value="1"/>
</dbReference>
<dbReference type="PROSITE" id="PS01312">
    <property type="entry name" value="SECA"/>
    <property type="match status" value="1"/>
</dbReference>
<dbReference type="PROSITE" id="PS51196">
    <property type="entry name" value="SECA_MOTOR_DEAD"/>
    <property type="match status" value="1"/>
</dbReference>
<proteinExistence type="inferred from homology"/>
<protein>
    <recommendedName>
        <fullName evidence="1">Protein translocase subunit SecA</fullName>
        <ecNumber evidence="1">7.4.2.8</ecNumber>
    </recommendedName>
</protein>
<sequence length="906" mass="102078">MASLGAFAKRLFGSSNDRRIKAYKARVEAINALEPDMIALSDDALRGKTAEFRARLADGAVLDELLPEAFAVVREAAKRSLGQRHYDVQLIGGMVLNDGNIAEMKTGEGKTLVSTLAAYLNALTGKGVHVVTVNDYLAKRDADWMGQIFRFLGLEVGVVLHGLDDNQRRAAYAADITYGTNNEYGFDYLRDNMKYQLASMVQRGHGFAIVDEVDSILIDEARTPLIISGPLDDKSDLYLSIDEVIPEIGEEDYELDEKQRTVNLTEEGNERVEEILRNRGIMLEGNLYDIENISIVHHVNNALRAHKLFQKDKDYIVKTGKVVIIDEFTGRMMEGRRYSDGLHQALEAKERVPIQPENQTLASITFQNYFRMYEKLSGMTGTALTEASEFGDIYGLDVLEIPTNKPIARIDEDDEVYRTTREKYEAMIGEIEECASRGQPVLVGTTSIEKSETLSELLKKKKVKHKVLNARYHEQEAHIVAQAGVPGNVTIATNMAGRGTDIQLGGNLDMRLADETAGIENEAELARKTAEVKADIEAKKQRALEAGGLYVIGTERHESRRIDNQLRGRSGRQGDPGRSKFYLSLEDDLMRIFGTDRMDGMLQKLGLQEGEAIVHPWINKALEKAQQKVEARNFDIRKNLLKFDNVMNDQRRAIFEQRIELMRAEDVSDTVDDMRRQVIDDMVAAHVPEKAYAEQWDMAGLKEEVKKNLDLDLPIETWADEEGIAEEEIRERLYSASDRHMASKAAQVGPDLMRQVEKAVLLQTLDQHWREHLMMLDHLRQAVGLRGYAQRDPLNEYKSEAFELFESLLARLRENVTRQLSVAQFITEAPRIEEQPLPEMQAHHTNPLTGEDEMADGDVATMQRPMRNDPGVAADPNDPRTWGKTPRNAPCPCGSGKKYKHCHGAL</sequence>
<reference key="1">
    <citation type="journal article" date="2011" name="Stand. Genomic Sci.">
        <title>Complete genome sequence of Parvibaculum lavamentivorans type strain (DS-1(T)).</title>
        <authorList>
            <person name="Schleheck D."/>
            <person name="Weiss M."/>
            <person name="Pitluck S."/>
            <person name="Bruce D."/>
            <person name="Land M.L."/>
            <person name="Han S."/>
            <person name="Saunders E."/>
            <person name="Tapia R."/>
            <person name="Detter C."/>
            <person name="Brettin T."/>
            <person name="Han J."/>
            <person name="Woyke T."/>
            <person name="Goodwin L."/>
            <person name="Pennacchio L."/>
            <person name="Nolan M."/>
            <person name="Cook A.M."/>
            <person name="Kjelleberg S."/>
            <person name="Thomas T."/>
        </authorList>
    </citation>
    <scope>NUCLEOTIDE SEQUENCE [LARGE SCALE GENOMIC DNA]</scope>
    <source>
        <strain>DS-1 / DSM 13023 / NCIMB 13966</strain>
    </source>
</reference>
<gene>
    <name evidence="1" type="primary">secA</name>
    <name type="ordered locus">Plav_1730</name>
</gene>
<accession>A7HTW6</accession>